<reference key="1">
    <citation type="journal article" date="1995" name="Science">
        <title>The minimal gene complement of Mycoplasma genitalium.</title>
        <authorList>
            <person name="Fraser C.M."/>
            <person name="Gocayne J.D."/>
            <person name="White O."/>
            <person name="Adams M.D."/>
            <person name="Clayton R.A."/>
            <person name="Fleischmann R.D."/>
            <person name="Bult C.J."/>
            <person name="Kerlavage A.R."/>
            <person name="Sutton G.G."/>
            <person name="Kelley J.M."/>
            <person name="Fritchman J.L."/>
            <person name="Weidman J.F."/>
            <person name="Small K.V."/>
            <person name="Sandusky M."/>
            <person name="Fuhrmann J.L."/>
            <person name="Nguyen D.T."/>
            <person name="Utterback T.R."/>
            <person name="Saudek D.M."/>
            <person name="Phillips C.A."/>
            <person name="Merrick J.M."/>
            <person name="Tomb J.-F."/>
            <person name="Dougherty B.A."/>
            <person name="Bott K.F."/>
            <person name="Hu P.-C."/>
            <person name="Lucier T.S."/>
            <person name="Peterson S.N."/>
            <person name="Smith H.O."/>
            <person name="Hutchison C.A. III"/>
            <person name="Venter J.C."/>
        </authorList>
    </citation>
    <scope>NUCLEOTIDE SEQUENCE [LARGE SCALE GENOMIC DNA]</scope>
    <source>
        <strain>ATCC 33530 / DSM 19775 / NCTC 10195 / G37</strain>
    </source>
</reference>
<reference key="2">
    <citation type="submission" date="1998-10" db="EMBL/GenBank/DDBJ databases">
        <authorList>
            <person name="Fraser C.M."/>
            <person name="Gocayne J.D."/>
            <person name="White O."/>
            <person name="Adams M.D."/>
            <person name="Clayton R.A."/>
            <person name="Fleischmann R.D."/>
            <person name="Bult C.J."/>
            <person name="Kerlavage A.R."/>
            <person name="Sutton G.G."/>
            <person name="Kelley J.M."/>
            <person name="Fritchman J.L."/>
            <person name="Weidman J.F."/>
            <person name="Small K.V."/>
            <person name="Sandusky M."/>
            <person name="Fuhrmann J.L."/>
            <person name="Nguyen D.T."/>
            <person name="Utterback T.R."/>
            <person name="Saudek D.M."/>
            <person name="Phillips C.A."/>
            <person name="Merrick J.M."/>
            <person name="Tomb J.-F."/>
            <person name="Dougherty B.A."/>
            <person name="Bott K.F."/>
            <person name="Hu P.-C."/>
            <person name="Lucier T.S."/>
            <person name="Peterson S.N."/>
            <person name="Smith H.O."/>
            <person name="Hutchison C.A. III"/>
            <person name="Venter J.C."/>
        </authorList>
    </citation>
    <scope>IDENTIFICATION</scope>
</reference>
<proteinExistence type="inferred from homology"/>
<evidence type="ECO:0000255" key="1">
    <source>
        <dbReference type="HAMAP-Rule" id="MF_00651"/>
    </source>
</evidence>
<protein>
    <recommendedName>
        <fullName evidence="1">Putative pre-16S rRNA nuclease</fullName>
        <ecNumber evidence="1">3.1.-.-</ecNumber>
    </recommendedName>
</protein>
<comment type="function">
    <text evidence="1">Could be a nuclease involved in processing of the 5'-end of pre-16S rRNA.</text>
</comment>
<comment type="subcellular location">
    <subcellularLocation>
        <location evidence="1">Cytoplasm</location>
    </subcellularLocation>
</comment>
<comment type="similarity">
    <text evidence="1">Belongs to the YqgF nuclease family.</text>
</comment>
<keyword id="KW-0963">Cytoplasm</keyword>
<keyword id="KW-0378">Hydrolase</keyword>
<keyword id="KW-0540">Nuclease</keyword>
<keyword id="KW-1185">Reference proteome</keyword>
<keyword id="KW-0690">Ribosome biogenesis</keyword>
<dbReference type="EC" id="3.1.-.-" evidence="1"/>
<dbReference type="EMBL" id="L43967">
    <property type="protein sequence ID" value="AAC71518.1"/>
    <property type="molecule type" value="Genomic_DNA"/>
</dbReference>
<dbReference type="RefSeq" id="WP_010869411.1">
    <property type="nucleotide sequence ID" value="NC_000908.2"/>
</dbReference>
<dbReference type="SMR" id="Q9ZB76"/>
<dbReference type="FunCoup" id="Q9ZB76">
    <property type="interactions" value="104"/>
</dbReference>
<dbReference type="STRING" id="243273.MG_505"/>
<dbReference type="GeneID" id="88282454"/>
<dbReference type="KEGG" id="mge:MG_505"/>
<dbReference type="eggNOG" id="COG0816">
    <property type="taxonomic scope" value="Bacteria"/>
</dbReference>
<dbReference type="HOGENOM" id="CLU_098240_2_2_14"/>
<dbReference type="InParanoid" id="Q9ZB76"/>
<dbReference type="OrthoDB" id="9796140at2"/>
<dbReference type="BioCyc" id="MGEN243273:G1GJ2-360-MONOMER"/>
<dbReference type="Proteomes" id="UP000000807">
    <property type="component" value="Chromosome"/>
</dbReference>
<dbReference type="GO" id="GO:0005737">
    <property type="term" value="C:cytoplasm"/>
    <property type="evidence" value="ECO:0007669"/>
    <property type="project" value="UniProtKB-SubCell"/>
</dbReference>
<dbReference type="GO" id="GO:0004518">
    <property type="term" value="F:nuclease activity"/>
    <property type="evidence" value="ECO:0007669"/>
    <property type="project" value="UniProtKB-KW"/>
</dbReference>
<dbReference type="GO" id="GO:0000967">
    <property type="term" value="P:rRNA 5'-end processing"/>
    <property type="evidence" value="ECO:0000318"/>
    <property type="project" value="GO_Central"/>
</dbReference>
<dbReference type="CDD" id="cd16964">
    <property type="entry name" value="YqgF"/>
    <property type="match status" value="1"/>
</dbReference>
<dbReference type="FunFam" id="3.30.420.140:FF:000013">
    <property type="entry name" value="Putative pre-16S rRNA nuclease"/>
    <property type="match status" value="1"/>
</dbReference>
<dbReference type="Gene3D" id="3.30.420.140">
    <property type="entry name" value="YqgF/RNase H-like domain"/>
    <property type="match status" value="1"/>
</dbReference>
<dbReference type="HAMAP" id="MF_00651">
    <property type="entry name" value="Nuclease_YqgF"/>
    <property type="match status" value="1"/>
</dbReference>
<dbReference type="InterPro" id="IPR012337">
    <property type="entry name" value="RNaseH-like_sf"/>
</dbReference>
<dbReference type="InterPro" id="IPR005227">
    <property type="entry name" value="YqgF"/>
</dbReference>
<dbReference type="InterPro" id="IPR006641">
    <property type="entry name" value="YqgF/RNaseH-like_dom"/>
</dbReference>
<dbReference type="InterPro" id="IPR037027">
    <property type="entry name" value="YqgF/RNaseH-like_dom_sf"/>
</dbReference>
<dbReference type="NCBIfam" id="TIGR00250">
    <property type="entry name" value="RNAse_H_YqgF"/>
    <property type="match status" value="1"/>
</dbReference>
<dbReference type="PANTHER" id="PTHR33317">
    <property type="entry name" value="POLYNUCLEOTIDYL TRANSFERASE, RIBONUCLEASE H-LIKE SUPERFAMILY PROTEIN"/>
    <property type="match status" value="1"/>
</dbReference>
<dbReference type="PANTHER" id="PTHR33317:SF4">
    <property type="entry name" value="POLYNUCLEOTIDYL TRANSFERASE, RIBONUCLEASE H-LIKE SUPERFAMILY PROTEIN"/>
    <property type="match status" value="1"/>
</dbReference>
<dbReference type="Pfam" id="PF03652">
    <property type="entry name" value="RuvX"/>
    <property type="match status" value="1"/>
</dbReference>
<dbReference type="SMART" id="SM00732">
    <property type="entry name" value="YqgFc"/>
    <property type="match status" value="1"/>
</dbReference>
<dbReference type="SUPFAM" id="SSF53098">
    <property type="entry name" value="Ribonuclease H-like"/>
    <property type="match status" value="1"/>
</dbReference>
<feature type="chain" id="PRO_0000172091" description="Putative pre-16S rRNA nuclease">
    <location>
        <begin position="1"/>
        <end position="138"/>
    </location>
</feature>
<sequence length="138" mass="16064">MKYILAIDFGLKKIGTAIANTLDKYPSAFHVFEVKNNFKTAVNNLFLRIKNDGYELEKIVIGFPKFHYYSDIQKAIKSFKQLLEKRFNLPIILVDESNTTSAVKDKLITMDLKHKDFKKAKDTLAAVLILERFFQNYH</sequence>
<gene>
    <name type="ordered locus">MG291.1</name>
</gene>
<organism>
    <name type="scientific">Mycoplasma genitalium (strain ATCC 33530 / DSM 19775 / NCTC 10195 / G37)</name>
    <name type="common">Mycoplasmoides genitalium</name>
    <dbReference type="NCBI Taxonomy" id="243273"/>
    <lineage>
        <taxon>Bacteria</taxon>
        <taxon>Bacillati</taxon>
        <taxon>Mycoplasmatota</taxon>
        <taxon>Mycoplasmoidales</taxon>
        <taxon>Mycoplasmoidaceae</taxon>
        <taxon>Mycoplasmoides</taxon>
    </lineage>
</organism>
<name>YQGF_MYCGE</name>
<accession>Q9ZB76</accession>